<protein>
    <recommendedName>
        <fullName evidence="1">Small ribosomal subunit protein uS4</fullName>
    </recommendedName>
    <alternativeName>
        <fullName evidence="2">30S ribosomal protein S4</fullName>
    </alternativeName>
</protein>
<sequence length="205" mass="23136">MTKIVRSKYKASRRLGVSLWGDSKDAFNTRNYRPGQHGQNTMIKTSDYGLHLKAKQRLKCHYGRVTEKQFRNIFALAQKMKGNTGENFIGLLESRLDTVVYRMNIAPTIFAARQLVSHGHIKLNGKKADIASIRLKAGDVIEVKESVKQIPLIQESVSKQGQTTPGYLSFDVPSLTGKYLRVPALSDVPYPFEAEVHLVIELYSR</sequence>
<dbReference type="EMBL" id="CP001612">
    <property type="protein sequence ID" value="ACP53367.1"/>
    <property type="molecule type" value="Genomic_DNA"/>
</dbReference>
<dbReference type="RefSeq" id="WP_010977111.1">
    <property type="nucleotide sequence ID" value="NC_012633.1"/>
</dbReference>
<dbReference type="SMR" id="C3PN57"/>
<dbReference type="GeneID" id="928700"/>
<dbReference type="KEGG" id="raf:RAF_ORF0435"/>
<dbReference type="HOGENOM" id="CLU_092403_0_0_5"/>
<dbReference type="Proteomes" id="UP000002305">
    <property type="component" value="Chromosome"/>
</dbReference>
<dbReference type="GO" id="GO:0015935">
    <property type="term" value="C:small ribosomal subunit"/>
    <property type="evidence" value="ECO:0007669"/>
    <property type="project" value="InterPro"/>
</dbReference>
<dbReference type="GO" id="GO:0019843">
    <property type="term" value="F:rRNA binding"/>
    <property type="evidence" value="ECO:0007669"/>
    <property type="project" value="UniProtKB-UniRule"/>
</dbReference>
<dbReference type="GO" id="GO:0003735">
    <property type="term" value="F:structural constituent of ribosome"/>
    <property type="evidence" value="ECO:0007669"/>
    <property type="project" value="InterPro"/>
</dbReference>
<dbReference type="GO" id="GO:0042274">
    <property type="term" value="P:ribosomal small subunit biogenesis"/>
    <property type="evidence" value="ECO:0007669"/>
    <property type="project" value="TreeGrafter"/>
</dbReference>
<dbReference type="GO" id="GO:0006412">
    <property type="term" value="P:translation"/>
    <property type="evidence" value="ECO:0007669"/>
    <property type="project" value="UniProtKB-UniRule"/>
</dbReference>
<dbReference type="CDD" id="cd00165">
    <property type="entry name" value="S4"/>
    <property type="match status" value="1"/>
</dbReference>
<dbReference type="FunFam" id="3.10.290.10:FF:000001">
    <property type="entry name" value="30S ribosomal protein S4"/>
    <property type="match status" value="1"/>
</dbReference>
<dbReference type="Gene3D" id="1.10.1050.10">
    <property type="entry name" value="Ribosomal Protein S4 Delta 41, Chain A, domain 1"/>
    <property type="match status" value="1"/>
</dbReference>
<dbReference type="Gene3D" id="3.10.290.10">
    <property type="entry name" value="RNA-binding S4 domain"/>
    <property type="match status" value="1"/>
</dbReference>
<dbReference type="HAMAP" id="MF_01306_B">
    <property type="entry name" value="Ribosomal_uS4_B"/>
    <property type="match status" value="1"/>
</dbReference>
<dbReference type="InterPro" id="IPR022801">
    <property type="entry name" value="Ribosomal_uS4"/>
</dbReference>
<dbReference type="InterPro" id="IPR005709">
    <property type="entry name" value="Ribosomal_uS4_bac-type"/>
</dbReference>
<dbReference type="InterPro" id="IPR018079">
    <property type="entry name" value="Ribosomal_uS4_CS"/>
</dbReference>
<dbReference type="InterPro" id="IPR001912">
    <property type="entry name" value="Ribosomal_uS4_N"/>
</dbReference>
<dbReference type="InterPro" id="IPR002942">
    <property type="entry name" value="S4_RNA-bd"/>
</dbReference>
<dbReference type="InterPro" id="IPR036986">
    <property type="entry name" value="S4_RNA-bd_sf"/>
</dbReference>
<dbReference type="NCBIfam" id="NF003717">
    <property type="entry name" value="PRK05327.1"/>
    <property type="match status" value="1"/>
</dbReference>
<dbReference type="NCBIfam" id="TIGR01017">
    <property type="entry name" value="rpsD_bact"/>
    <property type="match status" value="1"/>
</dbReference>
<dbReference type="PANTHER" id="PTHR11831">
    <property type="entry name" value="30S 40S RIBOSOMAL PROTEIN"/>
    <property type="match status" value="1"/>
</dbReference>
<dbReference type="PANTHER" id="PTHR11831:SF4">
    <property type="entry name" value="SMALL RIBOSOMAL SUBUNIT PROTEIN US4M"/>
    <property type="match status" value="1"/>
</dbReference>
<dbReference type="Pfam" id="PF00163">
    <property type="entry name" value="Ribosomal_S4"/>
    <property type="match status" value="1"/>
</dbReference>
<dbReference type="Pfam" id="PF01479">
    <property type="entry name" value="S4"/>
    <property type="match status" value="1"/>
</dbReference>
<dbReference type="SMART" id="SM01390">
    <property type="entry name" value="Ribosomal_S4"/>
    <property type="match status" value="1"/>
</dbReference>
<dbReference type="SMART" id="SM00363">
    <property type="entry name" value="S4"/>
    <property type="match status" value="1"/>
</dbReference>
<dbReference type="SUPFAM" id="SSF55174">
    <property type="entry name" value="Alpha-L RNA-binding motif"/>
    <property type="match status" value="1"/>
</dbReference>
<dbReference type="PROSITE" id="PS00632">
    <property type="entry name" value="RIBOSOMAL_S4"/>
    <property type="match status" value="1"/>
</dbReference>
<dbReference type="PROSITE" id="PS50889">
    <property type="entry name" value="S4"/>
    <property type="match status" value="1"/>
</dbReference>
<organism>
    <name type="scientific">Rickettsia africae (strain ESF-5)</name>
    <dbReference type="NCBI Taxonomy" id="347255"/>
    <lineage>
        <taxon>Bacteria</taxon>
        <taxon>Pseudomonadati</taxon>
        <taxon>Pseudomonadota</taxon>
        <taxon>Alphaproteobacteria</taxon>
        <taxon>Rickettsiales</taxon>
        <taxon>Rickettsiaceae</taxon>
        <taxon>Rickettsieae</taxon>
        <taxon>Rickettsia</taxon>
        <taxon>spotted fever group</taxon>
    </lineage>
</organism>
<proteinExistence type="inferred from homology"/>
<comment type="function">
    <text evidence="1">One of the primary rRNA binding proteins, it binds directly to 16S rRNA where it nucleates assembly of the body of the 30S subunit.</text>
</comment>
<comment type="function">
    <text evidence="1">With S5 and S12 plays an important role in translational accuracy.</text>
</comment>
<comment type="subunit">
    <text evidence="1">Part of the 30S ribosomal subunit. Contacts protein S5. The interaction surface between S4 and S5 is involved in control of translational fidelity.</text>
</comment>
<comment type="similarity">
    <text evidence="1">Belongs to the universal ribosomal protein uS4 family.</text>
</comment>
<evidence type="ECO:0000255" key="1">
    <source>
        <dbReference type="HAMAP-Rule" id="MF_01306"/>
    </source>
</evidence>
<evidence type="ECO:0000305" key="2"/>
<keyword id="KW-0687">Ribonucleoprotein</keyword>
<keyword id="KW-0689">Ribosomal protein</keyword>
<keyword id="KW-0694">RNA-binding</keyword>
<keyword id="KW-0699">rRNA-binding</keyword>
<feature type="chain" id="PRO_1000214300" description="Small ribosomal subunit protein uS4">
    <location>
        <begin position="1"/>
        <end position="205"/>
    </location>
</feature>
<feature type="domain" description="S4 RNA-binding" evidence="1">
    <location>
        <begin position="94"/>
        <end position="157"/>
    </location>
</feature>
<name>RS4_RICAE</name>
<accession>C3PN57</accession>
<reference key="1">
    <citation type="journal article" date="2009" name="BMC Genomics">
        <title>Analysis of the Rickettsia africae genome reveals that virulence acquisition in Rickettsia species may be explained by genome reduction.</title>
        <authorList>
            <person name="Fournier P.-E."/>
            <person name="El Karkouri K."/>
            <person name="Leroy Q."/>
            <person name="Robert C."/>
            <person name="Giumelli B."/>
            <person name="Renesto P."/>
            <person name="Socolovschi C."/>
            <person name="Parola P."/>
            <person name="Audic S."/>
            <person name="Raoult D."/>
        </authorList>
    </citation>
    <scope>NUCLEOTIDE SEQUENCE [LARGE SCALE GENOMIC DNA]</scope>
    <source>
        <strain>ESF-5</strain>
    </source>
</reference>
<gene>
    <name evidence="1" type="primary">rpsD</name>
    <name type="ordered locus">RAF_ORF0435</name>
</gene>